<keyword id="KW-0285">Flavoprotein</keyword>
<keyword id="KW-0288">FMN</keyword>
<keyword id="KW-0520">NAD</keyword>
<keyword id="KW-0560">Oxidoreductase</keyword>
<feature type="chain" id="PRO_0000443541" description="NADH-dependent FMN reductase SfnF">
    <location>
        <begin position="1"/>
        <end position="186"/>
    </location>
</feature>
<name>SFNF_PSEPU</name>
<gene>
    <name evidence="4" type="primary">sfnF</name>
    <name evidence="3" type="synonym">msuE</name>
    <name evidence="5" type="synonym">sfnE</name>
</gene>
<comment type="function">
    <text evidence="1">Involved in the dimethyl sulfide degradation pathway. Catalyzes the NADH-dependent reduction of FMN.</text>
</comment>
<comment type="catalytic activity">
    <reaction evidence="1">
        <text>FMNH2 + NAD(+) = FMN + NADH + 2 H(+)</text>
        <dbReference type="Rhea" id="RHEA:21620"/>
        <dbReference type="ChEBI" id="CHEBI:15378"/>
        <dbReference type="ChEBI" id="CHEBI:57540"/>
        <dbReference type="ChEBI" id="CHEBI:57618"/>
        <dbReference type="ChEBI" id="CHEBI:57945"/>
        <dbReference type="ChEBI" id="CHEBI:58210"/>
        <dbReference type="EC" id="1.5.1.42"/>
    </reaction>
</comment>
<comment type="induction">
    <text evidence="2">Transcriptionally activated by SfnR.</text>
</comment>
<comment type="similarity">
    <text evidence="6">Belongs to the SsuE family.</text>
</comment>
<sequence length="186" mass="20473">MNTSVIRVVVVSGSLRAPSRTHGLLQALVEKLQARLSNLDVHWVRIAELCSALSGSLERDTASADLQLHLQAIEQADLLLVGSPVYRASYTGLFKHLFDLVDHQSLRGVPVVLAATGGSERHALMIDHQLRPLFAFFQAHTLPYGLYASVEAFDQHHLVEPAQFERIERVLDTVSAFFQIPVASAA</sequence>
<proteinExistence type="evidence at transcript level"/>
<protein>
    <recommendedName>
        <fullName evidence="1">NADH-dependent FMN reductase SfnF</fullName>
        <ecNumber evidence="1">1.5.1.42</ecNumber>
    </recommendedName>
    <alternativeName>
        <fullName evidence="1">NADH-flavin reductase</fullName>
    </alternativeName>
</protein>
<evidence type="ECO:0000250" key="1">
    <source>
        <dbReference type="UniProtKB" id="Q3K9A2"/>
    </source>
</evidence>
<evidence type="ECO:0000269" key="2">
    <source>
    </source>
</evidence>
<evidence type="ECO:0000303" key="3">
    <source>
    </source>
</evidence>
<evidence type="ECO:0000303" key="4">
    <source>
    </source>
</evidence>
<evidence type="ECO:0000303" key="5">
    <source ref="2"/>
</evidence>
<evidence type="ECO:0000305" key="6"/>
<evidence type="ECO:0000312" key="7">
    <source>
        <dbReference type="EMBL" id="BAD51729.1"/>
    </source>
</evidence>
<reference key="1">
    <citation type="journal article" date="2003" name="Appl. Microbiol. Biotechnol.">
        <title>Characterization and identification of genes essential for dimethyl sulfide utilization in Pseudomonas putida strain DS1.</title>
        <authorList>
            <person name="Endoh T."/>
            <person name="Kasuga K."/>
            <person name="Horinouchi M."/>
            <person name="Yoshida T."/>
            <person name="Habe H."/>
            <person name="Nojiri H."/>
            <person name="Omori T."/>
        </authorList>
    </citation>
    <scope>NUCLEOTIDE SEQUENCE [GENOMIC DNA]</scope>
    <source>
        <strain evidence="7">DS1</strain>
    </source>
</reference>
<reference key="2">
    <citation type="journal article" date="2003" name="Microbiology (Mosc.)">
        <title>A CysB-regulated and sigma54-dependent regulator, SfnR, is essential for dimethyl sulfone metabolism of Pseudomonas putida strain DS1.</title>
        <authorList>
            <person name="Endoh T."/>
            <person name="Habe H."/>
            <person name="Yoshida T."/>
            <person name="Nojiri H."/>
            <person name="Omori T."/>
        </authorList>
    </citation>
    <scope>NUCLEOTIDE SEQUENCE [GENOMIC DNA]</scope>
    <source>
        <strain evidence="7">DS1</strain>
    </source>
</reference>
<reference key="3">
    <citation type="journal article" date="2005" name="Mol. Microbiol.">
        <title>The sigma54-dependent transcriptional activator SfnR regulates the expression of the Pseudomonas putida sfnFG operon responsible for dimethyl sulphone utilization.</title>
        <authorList>
            <person name="Endoh T."/>
            <person name="Habe H."/>
            <person name="Nojiri H."/>
            <person name="Yamane H."/>
            <person name="Omori T."/>
        </authorList>
    </citation>
    <scope>NUCLEOTIDE SEQUENCE [GENOMIC DNA]</scope>
    <scope>INDUCTION</scope>
    <source>
        <strain evidence="7">DS1</strain>
    </source>
</reference>
<dbReference type="EC" id="1.5.1.42" evidence="1"/>
<dbReference type="EMBL" id="AB174850">
    <property type="protein sequence ID" value="BAD51729.1"/>
    <property type="molecule type" value="Genomic_DNA"/>
</dbReference>
<dbReference type="SMR" id="Q65YX0"/>
<dbReference type="GO" id="GO:0052874">
    <property type="term" value="F:FMN reductase (NADH) activity"/>
    <property type="evidence" value="ECO:0007669"/>
    <property type="project" value="UniProtKB-EC"/>
</dbReference>
<dbReference type="GO" id="GO:0016655">
    <property type="term" value="F:oxidoreductase activity, acting on NAD(P)H, quinone or similar compound as acceptor"/>
    <property type="evidence" value="ECO:0007669"/>
    <property type="project" value="UniProtKB-ARBA"/>
</dbReference>
<dbReference type="Gene3D" id="3.40.50.360">
    <property type="match status" value="1"/>
</dbReference>
<dbReference type="InterPro" id="IPR029039">
    <property type="entry name" value="Flavoprotein-like_sf"/>
</dbReference>
<dbReference type="InterPro" id="IPR005025">
    <property type="entry name" value="FMN_Rdtase-like_dom"/>
</dbReference>
<dbReference type="InterPro" id="IPR019912">
    <property type="entry name" value="FMN_Rdtase_MsuE-like"/>
</dbReference>
<dbReference type="InterPro" id="IPR051814">
    <property type="entry name" value="NAD(P)H-dep_FMN_reductase"/>
</dbReference>
<dbReference type="NCBIfam" id="TIGR03566">
    <property type="entry name" value="FMN_reduc_MsuE"/>
    <property type="match status" value="1"/>
</dbReference>
<dbReference type="PANTHER" id="PTHR43408">
    <property type="entry name" value="FMN REDUCTASE (NADPH)"/>
    <property type="match status" value="1"/>
</dbReference>
<dbReference type="PANTHER" id="PTHR43408:SF2">
    <property type="entry name" value="FMN REDUCTASE (NADPH)"/>
    <property type="match status" value="1"/>
</dbReference>
<dbReference type="Pfam" id="PF03358">
    <property type="entry name" value="FMN_red"/>
    <property type="match status" value="1"/>
</dbReference>
<dbReference type="SUPFAM" id="SSF52218">
    <property type="entry name" value="Flavoproteins"/>
    <property type="match status" value="1"/>
</dbReference>
<organism>
    <name type="scientific">Pseudomonas putida</name>
    <name type="common">Arthrobacter siderocapsulatus</name>
    <dbReference type="NCBI Taxonomy" id="303"/>
    <lineage>
        <taxon>Bacteria</taxon>
        <taxon>Pseudomonadati</taxon>
        <taxon>Pseudomonadota</taxon>
        <taxon>Gammaproteobacteria</taxon>
        <taxon>Pseudomonadales</taxon>
        <taxon>Pseudomonadaceae</taxon>
        <taxon>Pseudomonas</taxon>
    </lineage>
</organism>
<accession>Q65YX0</accession>